<dbReference type="EC" id="4.1.2.40" evidence="1"/>
<dbReference type="EMBL" id="AE014613">
    <property type="protein sequence ID" value="AAO70712.1"/>
    <property type="molecule type" value="Genomic_DNA"/>
</dbReference>
<dbReference type="EMBL" id="AL513382">
    <property type="protein sequence ID" value="CAD07775.1"/>
    <property type="molecule type" value="Genomic_DNA"/>
</dbReference>
<dbReference type="RefSeq" id="NP_457638.1">
    <property type="nucleotide sequence ID" value="NC_003198.1"/>
</dbReference>
<dbReference type="RefSeq" id="WP_000469985.1">
    <property type="nucleotide sequence ID" value="NZ_WSUR01000003.1"/>
</dbReference>
<dbReference type="SMR" id="Q8XGZ9"/>
<dbReference type="STRING" id="220341.gene:17587286"/>
<dbReference type="KEGG" id="stt:t3173"/>
<dbReference type="KEGG" id="sty:STY3435"/>
<dbReference type="PATRIC" id="fig|220341.7.peg.3497"/>
<dbReference type="eggNOG" id="COG0191">
    <property type="taxonomic scope" value="Bacteria"/>
</dbReference>
<dbReference type="HOGENOM" id="CLU_040088_0_1_6"/>
<dbReference type="OMA" id="FCLNAAH"/>
<dbReference type="OrthoDB" id="9803995at2"/>
<dbReference type="UniPathway" id="UPA00704">
    <property type="reaction ID" value="UER00716"/>
</dbReference>
<dbReference type="Proteomes" id="UP000000541">
    <property type="component" value="Chromosome"/>
</dbReference>
<dbReference type="Proteomes" id="UP000002670">
    <property type="component" value="Chromosome"/>
</dbReference>
<dbReference type="GO" id="GO:0005829">
    <property type="term" value="C:cytosol"/>
    <property type="evidence" value="ECO:0007669"/>
    <property type="project" value="TreeGrafter"/>
</dbReference>
<dbReference type="GO" id="GO:0009025">
    <property type="term" value="F:tagatose-bisphosphate aldolase activity"/>
    <property type="evidence" value="ECO:0007669"/>
    <property type="project" value="UniProtKB-UniRule"/>
</dbReference>
<dbReference type="GO" id="GO:0008270">
    <property type="term" value="F:zinc ion binding"/>
    <property type="evidence" value="ECO:0007669"/>
    <property type="project" value="UniProtKB-UniRule"/>
</dbReference>
<dbReference type="GO" id="GO:2001059">
    <property type="term" value="P:D-tagatose 6-phosphate catabolic process"/>
    <property type="evidence" value="ECO:0007669"/>
    <property type="project" value="UniProtKB-UniRule"/>
</dbReference>
<dbReference type="GO" id="GO:0019404">
    <property type="term" value="P:galactitol catabolic process"/>
    <property type="evidence" value="ECO:0007669"/>
    <property type="project" value="InterPro"/>
</dbReference>
<dbReference type="CDD" id="cd00947">
    <property type="entry name" value="TBP_aldolase_IIB"/>
    <property type="match status" value="1"/>
</dbReference>
<dbReference type="FunFam" id="3.20.20.70:FF:000043">
    <property type="entry name" value="D-tagatose-1,6-bisphosphate aldolase subunit GatY"/>
    <property type="match status" value="1"/>
</dbReference>
<dbReference type="Gene3D" id="3.20.20.70">
    <property type="entry name" value="Aldolase class I"/>
    <property type="match status" value="1"/>
</dbReference>
<dbReference type="HAMAP" id="MF_01294">
    <property type="entry name" value="TagBP_aldolase_GatY"/>
    <property type="match status" value="1"/>
</dbReference>
<dbReference type="InterPro" id="IPR013785">
    <property type="entry name" value="Aldolase_TIM"/>
</dbReference>
<dbReference type="InterPro" id="IPR050246">
    <property type="entry name" value="Class_II_FBP_aldolase"/>
</dbReference>
<dbReference type="InterPro" id="IPR000771">
    <property type="entry name" value="FBA_II"/>
</dbReference>
<dbReference type="InterPro" id="IPR011288">
    <property type="entry name" value="TagBP_ald_KbaY/GatY"/>
</dbReference>
<dbReference type="InterPro" id="IPR023955">
    <property type="entry name" value="TagBP_aldolase_GatY"/>
</dbReference>
<dbReference type="NCBIfam" id="TIGR00167">
    <property type="entry name" value="cbbA"/>
    <property type="match status" value="1"/>
</dbReference>
<dbReference type="NCBIfam" id="NF006626">
    <property type="entry name" value="PRK09195.1"/>
    <property type="match status" value="1"/>
</dbReference>
<dbReference type="NCBIfam" id="NF009374">
    <property type="entry name" value="PRK12737.1"/>
    <property type="match status" value="1"/>
</dbReference>
<dbReference type="NCBIfam" id="TIGR01858">
    <property type="entry name" value="tag_bisphos_ald"/>
    <property type="match status" value="1"/>
</dbReference>
<dbReference type="PANTHER" id="PTHR30304">
    <property type="entry name" value="D-TAGATOSE-1,6-BISPHOSPHATE ALDOLASE"/>
    <property type="match status" value="1"/>
</dbReference>
<dbReference type="PANTHER" id="PTHR30304:SF0">
    <property type="entry name" value="D-TAGATOSE-1,6-BISPHOSPHATE ALDOLASE SUBUNIT GATY-RELATED"/>
    <property type="match status" value="1"/>
</dbReference>
<dbReference type="Pfam" id="PF01116">
    <property type="entry name" value="F_bP_aldolase"/>
    <property type="match status" value="1"/>
</dbReference>
<dbReference type="PIRSF" id="PIRSF001359">
    <property type="entry name" value="F_bP_aldolase_II"/>
    <property type="match status" value="1"/>
</dbReference>
<dbReference type="SUPFAM" id="SSF51569">
    <property type="entry name" value="Aldolase"/>
    <property type="match status" value="1"/>
</dbReference>
<dbReference type="PROSITE" id="PS00602">
    <property type="entry name" value="ALDOLASE_CLASS_II_1"/>
    <property type="match status" value="1"/>
</dbReference>
<dbReference type="PROSITE" id="PS00806">
    <property type="entry name" value="ALDOLASE_CLASS_II_2"/>
    <property type="match status" value="1"/>
</dbReference>
<name>GATY_SALTI</name>
<sequence length="284" mass="30922">MFIISSKNMLQKAQHAGYAVPAFNIHNLETLQVVVETAAEMRSPLIVAGTPGTFSYAGMGNIVAIAGDLAREYNLPLAIHLDHHESLADIESKVMAGIRSVMIDGSHFPFEENVALVKSVVDFCHRYDTSVEAELGRLGGIEDDLVVDSKDALYTNPQQAREFVARTGIDSLAVAIGTAHGMYAAEPKLDFERLAEIRALVDIPLVLHGASGLPESDIRQAISLGVCKVNVATELKIAFSDALKEYFLQNPKANDPRHYMQPAKQAMKEVVRKVIHVCGCEGQL</sequence>
<gene>
    <name evidence="1" type="primary">gatY</name>
    <name type="ordered locus">STY3435</name>
    <name type="ordered locus">t3173</name>
</gene>
<organism>
    <name type="scientific">Salmonella typhi</name>
    <dbReference type="NCBI Taxonomy" id="90370"/>
    <lineage>
        <taxon>Bacteria</taxon>
        <taxon>Pseudomonadati</taxon>
        <taxon>Pseudomonadota</taxon>
        <taxon>Gammaproteobacteria</taxon>
        <taxon>Enterobacterales</taxon>
        <taxon>Enterobacteriaceae</taxon>
        <taxon>Salmonella</taxon>
    </lineage>
</organism>
<reference key="1">
    <citation type="journal article" date="2003" name="J. Bacteriol.">
        <title>Comparative genomics of Salmonella enterica serovar Typhi strains Ty2 and CT18.</title>
        <authorList>
            <person name="Deng W."/>
            <person name="Liou S.-R."/>
            <person name="Plunkett G. III"/>
            <person name="Mayhew G.F."/>
            <person name="Rose D.J."/>
            <person name="Burland V."/>
            <person name="Kodoyianni V."/>
            <person name="Schwartz D.C."/>
            <person name="Blattner F.R."/>
        </authorList>
    </citation>
    <scope>NUCLEOTIDE SEQUENCE [LARGE SCALE GENOMIC DNA]</scope>
    <source>
        <strain>ATCC 700931 / Ty2</strain>
    </source>
</reference>
<reference key="2">
    <citation type="journal article" date="2001" name="Nature">
        <title>Complete genome sequence of a multiple drug resistant Salmonella enterica serovar Typhi CT18.</title>
        <authorList>
            <person name="Parkhill J."/>
            <person name="Dougan G."/>
            <person name="James K.D."/>
            <person name="Thomson N.R."/>
            <person name="Pickard D."/>
            <person name="Wain J."/>
            <person name="Churcher C.M."/>
            <person name="Mungall K.L."/>
            <person name="Bentley S.D."/>
            <person name="Holden M.T.G."/>
            <person name="Sebaihia M."/>
            <person name="Baker S."/>
            <person name="Basham D."/>
            <person name="Brooks K."/>
            <person name="Chillingworth T."/>
            <person name="Connerton P."/>
            <person name="Cronin A."/>
            <person name="Davis P."/>
            <person name="Davies R.M."/>
            <person name="Dowd L."/>
            <person name="White N."/>
            <person name="Farrar J."/>
            <person name="Feltwell T."/>
            <person name="Hamlin N."/>
            <person name="Haque A."/>
            <person name="Hien T.T."/>
            <person name="Holroyd S."/>
            <person name="Jagels K."/>
            <person name="Krogh A."/>
            <person name="Larsen T.S."/>
            <person name="Leather S."/>
            <person name="Moule S."/>
            <person name="O'Gaora P."/>
            <person name="Parry C."/>
            <person name="Quail M.A."/>
            <person name="Rutherford K.M."/>
            <person name="Simmonds M."/>
            <person name="Skelton J."/>
            <person name="Stevens K."/>
            <person name="Whitehead S."/>
            <person name="Barrell B.G."/>
        </authorList>
    </citation>
    <scope>NUCLEOTIDE SEQUENCE [LARGE SCALE GENOMIC DNA]</scope>
    <source>
        <strain>CT18</strain>
    </source>
</reference>
<keyword id="KW-0298">Galactitol metabolism</keyword>
<keyword id="KW-0456">Lyase</keyword>
<keyword id="KW-0479">Metal-binding</keyword>
<keyword id="KW-0862">Zinc</keyword>
<evidence type="ECO:0000255" key="1">
    <source>
        <dbReference type="HAMAP-Rule" id="MF_01294"/>
    </source>
</evidence>
<comment type="function">
    <text evidence="1">Catalytic subunit of the tagatose-1,6-bisphosphate aldolase GatYZ, which catalyzes the reversible aldol condensation of dihydroxyacetone phosphate (DHAP or glycerone-phosphate) with glyceraldehyde 3-phosphate (G3P) to produce tagatose 1,6-bisphosphate (TBP). Requires GatZ subunit for full activity and stability. Is involved in the catabolism of galactitol.</text>
</comment>
<comment type="catalytic activity">
    <reaction evidence="1">
        <text>D-tagatofuranose 1,6-bisphosphate = D-glyceraldehyde 3-phosphate + dihydroxyacetone phosphate</text>
        <dbReference type="Rhea" id="RHEA:22948"/>
        <dbReference type="ChEBI" id="CHEBI:57642"/>
        <dbReference type="ChEBI" id="CHEBI:58694"/>
        <dbReference type="ChEBI" id="CHEBI:59776"/>
        <dbReference type="EC" id="4.1.2.40"/>
    </reaction>
</comment>
<comment type="cofactor">
    <cofactor evidence="1">
        <name>Zn(2+)</name>
        <dbReference type="ChEBI" id="CHEBI:29105"/>
    </cofactor>
    <text evidence="1">Binds 1 zinc ion per subunit.</text>
</comment>
<comment type="pathway">
    <text evidence="1">Carbohydrate metabolism; D-tagatose 6-phosphate degradation; D-glyceraldehyde 3-phosphate and glycerone phosphate from D-tagatose 6-phosphate: step 2/2.</text>
</comment>
<comment type="subunit">
    <text evidence="1">Forms a complex with GatZ.</text>
</comment>
<comment type="similarity">
    <text evidence="1">Belongs to the class II fructose-bisphosphate aldolase family. TagBP aldolase GatY subfamily.</text>
</comment>
<proteinExistence type="inferred from homology"/>
<feature type="chain" id="PRO_0000355350" description="D-tagatose-1,6-bisphosphate aldolase subunit GatY">
    <location>
        <begin position="1"/>
        <end position="284"/>
    </location>
</feature>
<feature type="active site" description="Proton donor" evidence="1">
    <location>
        <position position="82"/>
    </location>
</feature>
<feature type="binding site" evidence="1">
    <location>
        <position position="83"/>
    </location>
    <ligand>
        <name>Zn(2+)</name>
        <dbReference type="ChEBI" id="CHEBI:29105"/>
        <note>catalytic</note>
    </ligand>
</feature>
<feature type="binding site" evidence="1">
    <location>
        <position position="180"/>
    </location>
    <ligand>
        <name>Zn(2+)</name>
        <dbReference type="ChEBI" id="CHEBI:29105"/>
        <note>catalytic</note>
    </ligand>
</feature>
<feature type="binding site" evidence="1">
    <location>
        <position position="181"/>
    </location>
    <ligand>
        <name>dihydroxyacetone phosphate</name>
        <dbReference type="ChEBI" id="CHEBI:57642"/>
    </ligand>
</feature>
<feature type="binding site" evidence="1">
    <location>
        <position position="208"/>
    </location>
    <ligand>
        <name>Zn(2+)</name>
        <dbReference type="ChEBI" id="CHEBI:29105"/>
        <note>catalytic</note>
    </ligand>
</feature>
<feature type="binding site" evidence="1">
    <location>
        <begin position="209"/>
        <end position="211"/>
    </location>
    <ligand>
        <name>dihydroxyacetone phosphate</name>
        <dbReference type="ChEBI" id="CHEBI:57642"/>
    </ligand>
</feature>
<feature type="binding site" evidence="1">
    <location>
        <begin position="230"/>
        <end position="233"/>
    </location>
    <ligand>
        <name>dihydroxyacetone phosphate</name>
        <dbReference type="ChEBI" id="CHEBI:57642"/>
    </ligand>
</feature>
<accession>Q8XGZ9</accession>
<accession>Q7AM79</accession>
<protein>
    <recommendedName>
        <fullName evidence="1">D-tagatose-1,6-bisphosphate aldolase subunit GatY</fullName>
        <shortName evidence="1">TBPA</shortName>
        <shortName evidence="1">TagBP aldolase</shortName>
        <ecNumber evidence="1">4.1.2.40</ecNumber>
    </recommendedName>
    <alternativeName>
        <fullName evidence="1">D-tagatose-bisphosphate aldolase class II</fullName>
    </alternativeName>
    <alternativeName>
        <fullName evidence="1">Tagatose-bisphosphate aldolase</fullName>
    </alternativeName>
</protein>